<accession>D2RT08</accession>
<dbReference type="EC" id="2.4.2.-" evidence="1"/>
<dbReference type="EMBL" id="CP001860">
    <property type="protein sequence ID" value="ADB60888.1"/>
    <property type="molecule type" value="Genomic_DNA"/>
</dbReference>
<dbReference type="RefSeq" id="WP_012943177.1">
    <property type="nucleotide sequence ID" value="NC_013743.1"/>
</dbReference>
<dbReference type="SMR" id="D2RT08"/>
<dbReference type="STRING" id="543526.Htur_2004"/>
<dbReference type="GeneID" id="8742603"/>
<dbReference type="KEGG" id="htu:Htur_2004"/>
<dbReference type="eggNOG" id="arCOG00030">
    <property type="taxonomic scope" value="Archaea"/>
</dbReference>
<dbReference type="HOGENOM" id="CLU_126376_0_0_2"/>
<dbReference type="OrthoDB" id="8323at2157"/>
<dbReference type="Proteomes" id="UP000001903">
    <property type="component" value="Chromosome"/>
</dbReference>
<dbReference type="GO" id="GO:0016740">
    <property type="term" value="F:transferase activity"/>
    <property type="evidence" value="ECO:0007669"/>
    <property type="project" value="UniProtKB-KW"/>
</dbReference>
<dbReference type="GO" id="GO:0006166">
    <property type="term" value="P:purine ribonucleoside salvage"/>
    <property type="evidence" value="ECO:0007669"/>
    <property type="project" value="UniProtKB-KW"/>
</dbReference>
<dbReference type="CDD" id="cd06223">
    <property type="entry name" value="PRTases_typeI"/>
    <property type="match status" value="1"/>
</dbReference>
<dbReference type="Gene3D" id="3.40.50.2020">
    <property type="match status" value="1"/>
</dbReference>
<dbReference type="HAMAP" id="MF_01467">
    <property type="entry name" value="Hypx_phosphoribosyltr"/>
    <property type="match status" value="1"/>
</dbReference>
<dbReference type="InterPro" id="IPR026597">
    <property type="entry name" value="HGPRTase-like"/>
</dbReference>
<dbReference type="InterPro" id="IPR000836">
    <property type="entry name" value="PRibTrfase_dom"/>
</dbReference>
<dbReference type="InterPro" id="IPR029057">
    <property type="entry name" value="PRTase-like"/>
</dbReference>
<dbReference type="InterPro" id="IPR050118">
    <property type="entry name" value="Pur/Pyrimidine_PRTase"/>
</dbReference>
<dbReference type="NCBIfam" id="NF040646">
    <property type="entry name" value="HPT_Archaea"/>
    <property type="match status" value="1"/>
</dbReference>
<dbReference type="NCBIfam" id="NF002635">
    <property type="entry name" value="PRK02304.1-4"/>
    <property type="match status" value="1"/>
</dbReference>
<dbReference type="PANTHER" id="PTHR43864">
    <property type="entry name" value="HYPOXANTHINE/GUANINE PHOSPHORIBOSYLTRANSFERASE"/>
    <property type="match status" value="1"/>
</dbReference>
<dbReference type="PANTHER" id="PTHR43864:SF1">
    <property type="entry name" value="XANTHINE PHOSPHORIBOSYLTRANSFERASE"/>
    <property type="match status" value="1"/>
</dbReference>
<dbReference type="Pfam" id="PF00156">
    <property type="entry name" value="Pribosyltran"/>
    <property type="match status" value="1"/>
</dbReference>
<dbReference type="SUPFAM" id="SSF53271">
    <property type="entry name" value="PRTase-like"/>
    <property type="match status" value="1"/>
</dbReference>
<dbReference type="PROSITE" id="PS00103">
    <property type="entry name" value="PUR_PYR_PR_TRANSFER"/>
    <property type="match status" value="1"/>
</dbReference>
<reference key="1">
    <citation type="journal article" date="2010" name="Stand. Genomic Sci.">
        <title>Complete genome sequence of Haloterrigena turkmenica type strain (4k).</title>
        <authorList>
            <person name="Saunders E."/>
            <person name="Tindall B.J."/>
            <person name="Fahnrich R."/>
            <person name="Lapidus A."/>
            <person name="Copeland A."/>
            <person name="Del Rio T.G."/>
            <person name="Lucas S."/>
            <person name="Chen F."/>
            <person name="Tice H."/>
            <person name="Cheng J.F."/>
            <person name="Han C."/>
            <person name="Detter J.C."/>
            <person name="Bruce D."/>
            <person name="Goodwin L."/>
            <person name="Chain P."/>
            <person name="Pitluck S."/>
            <person name="Pati A."/>
            <person name="Ivanova N."/>
            <person name="Mavromatis K."/>
            <person name="Chen A."/>
            <person name="Palaniappan K."/>
            <person name="Land M."/>
            <person name="Hauser L."/>
            <person name="Chang Y.J."/>
            <person name="Jeffries C.D."/>
            <person name="Brettin T."/>
            <person name="Rohde M."/>
            <person name="Goker M."/>
            <person name="Bristow J."/>
            <person name="Eisen J.A."/>
            <person name="Markowitz V."/>
            <person name="Hugenholtz P."/>
            <person name="Klenk H.P."/>
            <person name="Kyrpides N.C."/>
        </authorList>
    </citation>
    <scope>NUCLEOTIDE SEQUENCE [LARGE SCALE GENOMIC DNA]</scope>
    <source>
        <strain>ATCC 51198 / DSM 5511 / JCM 9101 / NCIMB 13204 / VKM B-1734 / 4k</strain>
    </source>
</reference>
<gene>
    <name type="ordered locus">Htur_2004</name>
</gene>
<organism>
    <name type="scientific">Haloterrigena turkmenica (strain ATCC 51198 / DSM 5511 / JCM 9101 / NCIMB 13204 / VKM B-1734 / 4k)</name>
    <name type="common">Halococcus turkmenicus</name>
    <dbReference type="NCBI Taxonomy" id="543526"/>
    <lineage>
        <taxon>Archaea</taxon>
        <taxon>Methanobacteriati</taxon>
        <taxon>Methanobacteriota</taxon>
        <taxon>Stenosarchaea group</taxon>
        <taxon>Halobacteria</taxon>
        <taxon>Halobacteriales</taxon>
        <taxon>Natrialbaceae</taxon>
        <taxon>Haloterrigena</taxon>
    </lineage>
</organism>
<keyword id="KW-0660">Purine salvage</keyword>
<keyword id="KW-0808">Transferase</keyword>
<protein>
    <recommendedName>
        <fullName evidence="1">HGPRTase-like protein 2</fullName>
        <ecNumber evidence="1">2.4.2.-</ecNumber>
    </recommendedName>
</protein>
<feature type="chain" id="PRO_0000415461" description="HGPRTase-like protein 2">
    <location>
        <begin position="1"/>
        <end position="181"/>
    </location>
</feature>
<comment type="function">
    <text evidence="1">May catalyze a purine salvage reaction, the substrate is unknown.</text>
</comment>
<comment type="similarity">
    <text evidence="1">Belongs to the purine/pyrimidine phosphoribosyltransferase family. Archaeal HPRT subfamily.</text>
</comment>
<name>HPRL2_HALTV</name>
<sequence length="181" mass="19620">MEKLIESLSDAPIIDKDGYEYLVHPISNGVPMLDPDLLREVVVEVMQTADLDVDKIVAPEAMGIHLATALSLQTDIPLVVIRKRPYGLEGEVSLHQQTGYSESEMYINDVEEGDRVLIVDDMLSTGGTLAAICTALDDIGAEIVDIVVVLRKVGDSALDDTKFDATSLLDITVEDGDVTVH</sequence>
<proteinExistence type="inferred from homology"/>
<evidence type="ECO:0000255" key="1">
    <source>
        <dbReference type="HAMAP-Rule" id="MF_01467"/>
    </source>
</evidence>